<keyword id="KW-0021">Allosteric enzyme</keyword>
<keyword id="KW-0067">ATP-binding</keyword>
<keyword id="KW-0963">Cytoplasm</keyword>
<keyword id="KW-0324">Glycolysis</keyword>
<keyword id="KW-0418">Kinase</keyword>
<keyword id="KW-0460">Magnesium</keyword>
<keyword id="KW-0479">Metal-binding</keyword>
<keyword id="KW-0547">Nucleotide-binding</keyword>
<keyword id="KW-0808">Transferase</keyword>
<evidence type="ECO:0000255" key="1">
    <source>
        <dbReference type="HAMAP-Rule" id="MF_00339"/>
    </source>
</evidence>
<accession>B1IB66</accession>
<organism>
    <name type="scientific">Streptococcus pneumoniae (strain Hungary19A-6)</name>
    <dbReference type="NCBI Taxonomy" id="487214"/>
    <lineage>
        <taxon>Bacteria</taxon>
        <taxon>Bacillati</taxon>
        <taxon>Bacillota</taxon>
        <taxon>Bacilli</taxon>
        <taxon>Lactobacillales</taxon>
        <taxon>Streptococcaceae</taxon>
        <taxon>Streptococcus</taxon>
    </lineage>
</organism>
<protein>
    <recommendedName>
        <fullName evidence="1">ATP-dependent 6-phosphofructokinase</fullName>
        <shortName evidence="1">ATP-PFK</shortName>
        <shortName evidence="1">Phosphofructokinase</shortName>
        <ecNumber evidence="1">2.7.1.11</ecNumber>
    </recommendedName>
    <alternativeName>
        <fullName evidence="1">Phosphohexokinase</fullName>
    </alternativeName>
</protein>
<gene>
    <name evidence="1" type="primary">pfkA</name>
    <name type="ordered locus">SPH_1003</name>
</gene>
<sequence length="335" mass="35232">MKRIAVLTSGGDAPGMNAAIRAVVRQAISEGMEVFGIYDGYAGMVAGEIHPLDAASVGDIISRGGTFLHSARYPEFAQLEGQLKGIEQLKKHGIEGVVVIGGDGSYHGAMRLTEHGFPAIGLPGTIDNDIVGTDFTIGFDTAVTTAMDAIDKIRDTSSSHRRTFVIEVMGRNAGDIALWAGIATGADEIIIPEADFKMEDIVASIKAGYECGKKHNIIVLAEGVMSAAEFGQKLKEAGDTSDLRVTELGHIQRGGSPTARDRVLASRMGAHAVKLLKEGIGGVAVGIRNEKMVENPILGTAEEGALFSLTAEGKIVVNNPHKADIELSSLNKSLS</sequence>
<comment type="function">
    <text evidence="1">Catalyzes the phosphorylation of D-fructose 6-phosphate to fructose 1,6-bisphosphate by ATP, the first committing step of glycolysis.</text>
</comment>
<comment type="catalytic activity">
    <reaction evidence="1">
        <text>beta-D-fructose 6-phosphate + ATP = beta-D-fructose 1,6-bisphosphate + ADP + H(+)</text>
        <dbReference type="Rhea" id="RHEA:16109"/>
        <dbReference type="ChEBI" id="CHEBI:15378"/>
        <dbReference type="ChEBI" id="CHEBI:30616"/>
        <dbReference type="ChEBI" id="CHEBI:32966"/>
        <dbReference type="ChEBI" id="CHEBI:57634"/>
        <dbReference type="ChEBI" id="CHEBI:456216"/>
        <dbReference type="EC" id="2.7.1.11"/>
    </reaction>
</comment>
<comment type="cofactor">
    <cofactor evidence="1">
        <name>Mg(2+)</name>
        <dbReference type="ChEBI" id="CHEBI:18420"/>
    </cofactor>
</comment>
<comment type="activity regulation">
    <text evidence="1">Allosterically activated by ADP and other diphosphonucleosides, and allosterically inhibited by phosphoenolpyruvate.</text>
</comment>
<comment type="pathway">
    <text evidence="1">Carbohydrate degradation; glycolysis; D-glyceraldehyde 3-phosphate and glycerone phosphate from D-glucose: step 3/4.</text>
</comment>
<comment type="subunit">
    <text evidence="1">Homotetramer.</text>
</comment>
<comment type="subcellular location">
    <subcellularLocation>
        <location evidence="1">Cytoplasm</location>
    </subcellularLocation>
</comment>
<comment type="similarity">
    <text evidence="1">Belongs to the phosphofructokinase type A (PFKA) family. ATP-dependent PFK group I subfamily. Prokaryotic clade 'B1' sub-subfamily.</text>
</comment>
<dbReference type="EC" id="2.7.1.11" evidence="1"/>
<dbReference type="EMBL" id="CP000936">
    <property type="protein sequence ID" value="ACA36661.1"/>
    <property type="molecule type" value="Genomic_DNA"/>
</dbReference>
<dbReference type="RefSeq" id="WP_000820840.1">
    <property type="nucleotide sequence ID" value="NC_010380.1"/>
</dbReference>
<dbReference type="SMR" id="B1IB66"/>
<dbReference type="KEGG" id="spv:SPH_1003"/>
<dbReference type="HOGENOM" id="CLU_020655_0_1_9"/>
<dbReference type="UniPathway" id="UPA00109">
    <property type="reaction ID" value="UER00182"/>
</dbReference>
<dbReference type="Proteomes" id="UP000002163">
    <property type="component" value="Chromosome"/>
</dbReference>
<dbReference type="GO" id="GO:0005945">
    <property type="term" value="C:6-phosphofructokinase complex"/>
    <property type="evidence" value="ECO:0007669"/>
    <property type="project" value="TreeGrafter"/>
</dbReference>
<dbReference type="GO" id="GO:0003872">
    <property type="term" value="F:6-phosphofructokinase activity"/>
    <property type="evidence" value="ECO:0007669"/>
    <property type="project" value="UniProtKB-UniRule"/>
</dbReference>
<dbReference type="GO" id="GO:0016208">
    <property type="term" value="F:AMP binding"/>
    <property type="evidence" value="ECO:0007669"/>
    <property type="project" value="TreeGrafter"/>
</dbReference>
<dbReference type="GO" id="GO:0005524">
    <property type="term" value="F:ATP binding"/>
    <property type="evidence" value="ECO:0007669"/>
    <property type="project" value="UniProtKB-KW"/>
</dbReference>
<dbReference type="GO" id="GO:0070095">
    <property type="term" value="F:fructose-6-phosphate binding"/>
    <property type="evidence" value="ECO:0007669"/>
    <property type="project" value="TreeGrafter"/>
</dbReference>
<dbReference type="GO" id="GO:0042802">
    <property type="term" value="F:identical protein binding"/>
    <property type="evidence" value="ECO:0007669"/>
    <property type="project" value="TreeGrafter"/>
</dbReference>
<dbReference type="GO" id="GO:0046872">
    <property type="term" value="F:metal ion binding"/>
    <property type="evidence" value="ECO:0007669"/>
    <property type="project" value="UniProtKB-KW"/>
</dbReference>
<dbReference type="GO" id="GO:0048029">
    <property type="term" value="F:monosaccharide binding"/>
    <property type="evidence" value="ECO:0007669"/>
    <property type="project" value="TreeGrafter"/>
</dbReference>
<dbReference type="GO" id="GO:0061621">
    <property type="term" value="P:canonical glycolysis"/>
    <property type="evidence" value="ECO:0007669"/>
    <property type="project" value="TreeGrafter"/>
</dbReference>
<dbReference type="GO" id="GO:0030388">
    <property type="term" value="P:fructose 1,6-bisphosphate metabolic process"/>
    <property type="evidence" value="ECO:0007669"/>
    <property type="project" value="TreeGrafter"/>
</dbReference>
<dbReference type="GO" id="GO:0006002">
    <property type="term" value="P:fructose 6-phosphate metabolic process"/>
    <property type="evidence" value="ECO:0007669"/>
    <property type="project" value="InterPro"/>
</dbReference>
<dbReference type="CDD" id="cd00763">
    <property type="entry name" value="Bacterial_PFK"/>
    <property type="match status" value="1"/>
</dbReference>
<dbReference type="FunFam" id="3.40.50.450:FF:000001">
    <property type="entry name" value="ATP-dependent 6-phosphofructokinase"/>
    <property type="match status" value="1"/>
</dbReference>
<dbReference type="FunFam" id="3.40.50.460:FF:000002">
    <property type="entry name" value="ATP-dependent 6-phosphofructokinase"/>
    <property type="match status" value="1"/>
</dbReference>
<dbReference type="Gene3D" id="3.40.50.450">
    <property type="match status" value="1"/>
</dbReference>
<dbReference type="Gene3D" id="3.40.50.460">
    <property type="entry name" value="Phosphofructokinase domain"/>
    <property type="match status" value="1"/>
</dbReference>
<dbReference type="HAMAP" id="MF_00339">
    <property type="entry name" value="Phosphofructokinase_I_B1"/>
    <property type="match status" value="1"/>
</dbReference>
<dbReference type="InterPro" id="IPR022953">
    <property type="entry name" value="ATP_PFK"/>
</dbReference>
<dbReference type="InterPro" id="IPR012003">
    <property type="entry name" value="ATP_PFK_prok-type"/>
</dbReference>
<dbReference type="InterPro" id="IPR012828">
    <property type="entry name" value="PFKA_ATP_prok"/>
</dbReference>
<dbReference type="InterPro" id="IPR015912">
    <property type="entry name" value="Phosphofructokinase_CS"/>
</dbReference>
<dbReference type="InterPro" id="IPR000023">
    <property type="entry name" value="Phosphofructokinase_dom"/>
</dbReference>
<dbReference type="InterPro" id="IPR035966">
    <property type="entry name" value="PKF_sf"/>
</dbReference>
<dbReference type="NCBIfam" id="TIGR02482">
    <property type="entry name" value="PFKA_ATP"/>
    <property type="match status" value="1"/>
</dbReference>
<dbReference type="NCBIfam" id="NF002872">
    <property type="entry name" value="PRK03202.1"/>
    <property type="match status" value="1"/>
</dbReference>
<dbReference type="PANTHER" id="PTHR13697:SF4">
    <property type="entry name" value="ATP-DEPENDENT 6-PHOSPHOFRUCTOKINASE"/>
    <property type="match status" value="1"/>
</dbReference>
<dbReference type="PANTHER" id="PTHR13697">
    <property type="entry name" value="PHOSPHOFRUCTOKINASE"/>
    <property type="match status" value="1"/>
</dbReference>
<dbReference type="Pfam" id="PF00365">
    <property type="entry name" value="PFK"/>
    <property type="match status" value="1"/>
</dbReference>
<dbReference type="PIRSF" id="PIRSF000532">
    <property type="entry name" value="ATP_PFK_prok"/>
    <property type="match status" value="1"/>
</dbReference>
<dbReference type="PRINTS" id="PR00476">
    <property type="entry name" value="PHFRCTKINASE"/>
</dbReference>
<dbReference type="SUPFAM" id="SSF53784">
    <property type="entry name" value="Phosphofructokinase"/>
    <property type="match status" value="1"/>
</dbReference>
<dbReference type="PROSITE" id="PS00433">
    <property type="entry name" value="PHOSPHOFRUCTOKINASE"/>
    <property type="match status" value="1"/>
</dbReference>
<reference key="1">
    <citation type="journal article" date="2010" name="Genome Biol.">
        <title>Structure and dynamics of the pan-genome of Streptococcus pneumoniae and closely related species.</title>
        <authorList>
            <person name="Donati C."/>
            <person name="Hiller N.L."/>
            <person name="Tettelin H."/>
            <person name="Muzzi A."/>
            <person name="Croucher N.J."/>
            <person name="Angiuoli S.V."/>
            <person name="Oggioni M."/>
            <person name="Dunning Hotopp J.C."/>
            <person name="Hu F.Z."/>
            <person name="Riley D.R."/>
            <person name="Covacci A."/>
            <person name="Mitchell T.J."/>
            <person name="Bentley S.D."/>
            <person name="Kilian M."/>
            <person name="Ehrlich G.D."/>
            <person name="Rappuoli R."/>
            <person name="Moxon E.R."/>
            <person name="Masignani V."/>
        </authorList>
    </citation>
    <scope>NUCLEOTIDE SEQUENCE [LARGE SCALE GENOMIC DNA]</scope>
    <source>
        <strain>Hungary19A-6</strain>
    </source>
</reference>
<feature type="chain" id="PRO_1000120061" description="ATP-dependent 6-phosphofructokinase">
    <location>
        <begin position="1"/>
        <end position="335"/>
    </location>
</feature>
<feature type="active site" description="Proton acceptor" evidence="1">
    <location>
        <position position="127"/>
    </location>
</feature>
<feature type="binding site" evidence="1">
    <location>
        <position position="11"/>
    </location>
    <ligand>
        <name>ATP</name>
        <dbReference type="ChEBI" id="CHEBI:30616"/>
    </ligand>
</feature>
<feature type="binding site" evidence="1">
    <location>
        <begin position="21"/>
        <end position="25"/>
    </location>
    <ligand>
        <name>ADP</name>
        <dbReference type="ChEBI" id="CHEBI:456216"/>
        <note>allosteric activator; ligand shared between dimeric partners</note>
    </ligand>
</feature>
<feature type="binding site" evidence="1">
    <location>
        <begin position="72"/>
        <end position="73"/>
    </location>
    <ligand>
        <name>ATP</name>
        <dbReference type="ChEBI" id="CHEBI:30616"/>
    </ligand>
</feature>
<feature type="binding site" evidence="1">
    <location>
        <begin position="102"/>
        <end position="105"/>
    </location>
    <ligand>
        <name>ATP</name>
        <dbReference type="ChEBI" id="CHEBI:30616"/>
    </ligand>
</feature>
<feature type="binding site" evidence="1">
    <location>
        <position position="103"/>
    </location>
    <ligand>
        <name>Mg(2+)</name>
        <dbReference type="ChEBI" id="CHEBI:18420"/>
        <note>catalytic</note>
    </ligand>
</feature>
<feature type="binding site" description="in other chain" evidence="1">
    <location>
        <begin position="125"/>
        <end position="127"/>
    </location>
    <ligand>
        <name>substrate</name>
        <note>ligand shared between dimeric partners</note>
    </ligand>
</feature>
<feature type="binding site" description="in other chain" evidence="1">
    <location>
        <position position="154"/>
    </location>
    <ligand>
        <name>ADP</name>
        <dbReference type="ChEBI" id="CHEBI:456216"/>
        <note>allosteric activator; ligand shared between dimeric partners</note>
    </ligand>
</feature>
<feature type="binding site" evidence="1">
    <location>
        <position position="162"/>
    </location>
    <ligand>
        <name>substrate</name>
        <note>ligand shared between dimeric partners</note>
    </ligand>
</feature>
<feature type="binding site" description="in other chain" evidence="1">
    <location>
        <begin position="169"/>
        <end position="171"/>
    </location>
    <ligand>
        <name>substrate</name>
        <note>ligand shared between dimeric partners</note>
    </ligand>
</feature>
<feature type="binding site" description="in other chain" evidence="1">
    <location>
        <begin position="185"/>
        <end position="187"/>
    </location>
    <ligand>
        <name>ADP</name>
        <dbReference type="ChEBI" id="CHEBI:456216"/>
        <note>allosteric activator; ligand shared between dimeric partners</note>
    </ligand>
</feature>
<feature type="binding site" description="in other chain" evidence="1">
    <location>
        <begin position="213"/>
        <end position="215"/>
    </location>
    <ligand>
        <name>ADP</name>
        <dbReference type="ChEBI" id="CHEBI:456216"/>
        <note>allosteric activator; ligand shared between dimeric partners</note>
    </ligand>
</feature>
<feature type="binding site" description="in other chain" evidence="1">
    <location>
        <position position="222"/>
    </location>
    <ligand>
        <name>substrate</name>
        <note>ligand shared between dimeric partners</note>
    </ligand>
</feature>
<feature type="binding site" evidence="1">
    <location>
        <position position="244"/>
    </location>
    <ligand>
        <name>substrate</name>
        <note>ligand shared between dimeric partners</note>
    </ligand>
</feature>
<feature type="binding site" description="in other chain" evidence="1">
    <location>
        <begin position="250"/>
        <end position="253"/>
    </location>
    <ligand>
        <name>substrate</name>
        <note>ligand shared between dimeric partners</note>
    </ligand>
</feature>
<name>PFKA_STRPI</name>
<proteinExistence type="inferred from homology"/>